<gene>
    <name type="primary">fxsA</name>
</gene>
<dbReference type="EMBL" id="D13252">
    <property type="protein sequence ID" value="BAA02517.1"/>
    <property type="molecule type" value="Genomic_DNA"/>
</dbReference>
<dbReference type="PIR" id="PS0396">
    <property type="entry name" value="PS0396"/>
</dbReference>
<dbReference type="STRING" id="273526.SMDB11_4455"/>
<dbReference type="GO" id="GO:0005886">
    <property type="term" value="C:plasma membrane"/>
    <property type="evidence" value="ECO:0007669"/>
    <property type="project" value="UniProtKB-SubCell"/>
</dbReference>
<dbReference type="InterPro" id="IPR007313">
    <property type="entry name" value="FxsA"/>
</dbReference>
<dbReference type="NCBIfam" id="NF008528">
    <property type="entry name" value="PRK11463.1-2"/>
    <property type="match status" value="1"/>
</dbReference>
<dbReference type="PANTHER" id="PTHR35335">
    <property type="entry name" value="UPF0716 PROTEIN FXSA"/>
    <property type="match status" value="1"/>
</dbReference>
<dbReference type="PANTHER" id="PTHR35335:SF1">
    <property type="entry name" value="UPF0716 PROTEIN FXSA"/>
    <property type="match status" value="1"/>
</dbReference>
<dbReference type="Pfam" id="PF04186">
    <property type="entry name" value="FxsA"/>
    <property type="match status" value="1"/>
</dbReference>
<protein>
    <recommendedName>
        <fullName>UPF0716 protein FxsA</fullName>
    </recommendedName>
    <alternativeName>
        <fullName>Suppressor of F exclusion of phage T7</fullName>
    </alternativeName>
</protein>
<organism>
    <name type="scientific">Serratia marcescens</name>
    <dbReference type="NCBI Taxonomy" id="615"/>
    <lineage>
        <taxon>Bacteria</taxon>
        <taxon>Pseudomonadati</taxon>
        <taxon>Pseudomonadota</taxon>
        <taxon>Gammaproteobacteria</taxon>
        <taxon>Enterobacterales</taxon>
        <taxon>Yersiniaceae</taxon>
        <taxon>Serratia</taxon>
    </lineage>
</organism>
<sequence length="139" mass="14996">MRWLPLLLIFLLAYIEISIFIKVAAVLGVAVTLLLVVFSSCVGISLVRNQGMKTFVQMQQKLAAGESPAAEMVKSVSLVLAGFLLLIPGFFTDFLGLLLLLPPVQKSLTLKLMPHLSVYRPGGWTGGDAANGNTFDGEF</sequence>
<name>FXSA_SERMA</name>
<feature type="chain" id="PRO_0000087395" description="UPF0716 protein FxsA">
    <location>
        <begin position="1"/>
        <end position="139" status="greater than"/>
    </location>
</feature>
<feature type="transmembrane region" description="Helical" evidence="1">
    <location>
        <begin position="17"/>
        <end position="37"/>
    </location>
</feature>
<feature type="transmembrane region" description="Helical" evidence="1">
    <location>
        <begin position="78"/>
        <end position="98"/>
    </location>
</feature>
<feature type="non-terminal residue">
    <location>
        <position position="139"/>
    </location>
</feature>
<evidence type="ECO:0000255" key="1"/>
<evidence type="ECO:0000305" key="2"/>
<accession>P37148</accession>
<proteinExistence type="inferred from homology"/>
<comment type="subcellular location">
    <subcellularLocation>
        <location evidence="2">Cell inner membrane</location>
        <topology evidence="2">Multi-pass membrane protein</topology>
    </subcellularLocation>
</comment>
<comment type="similarity">
    <text evidence="2">Belongs to the UPF0716 (FxsA) family.</text>
</comment>
<reference key="1">
    <citation type="journal article" date="1994" name="Plasmid">
        <title>Construction of a versatile promoter analysis vector and its use for analysis of the Serratia marcescens aspartase promoter region.</title>
        <authorList>
            <person name="Omori K."/>
            <person name="Akatsuka H."/>
            <person name="Komatsubara S."/>
        </authorList>
    </citation>
    <scope>NUCLEOTIDE SEQUENCE [GENOMIC DNA]</scope>
    <source>
        <strain>Sr41</strain>
    </source>
</reference>
<keyword id="KW-0997">Cell inner membrane</keyword>
<keyword id="KW-1003">Cell membrane</keyword>
<keyword id="KW-0472">Membrane</keyword>
<keyword id="KW-0812">Transmembrane</keyword>
<keyword id="KW-1133">Transmembrane helix</keyword>